<feature type="signal peptide" evidence="5">
    <location>
        <begin position="1"/>
        <end position="18"/>
    </location>
</feature>
<feature type="chain" id="PRO_0000011529" description="Glutamate receptor 1">
    <location>
        <begin position="19"/>
        <end position="906"/>
    </location>
</feature>
<feature type="topological domain" description="Extracellular" evidence="1">
    <location>
        <begin position="19"/>
        <end position="536"/>
    </location>
</feature>
<feature type="transmembrane region" description="Helical" evidence="1">
    <location>
        <begin position="537"/>
        <end position="557"/>
    </location>
</feature>
<feature type="topological domain" description="Cytoplasmic" evidence="1">
    <location>
        <begin position="558"/>
        <end position="584"/>
    </location>
</feature>
<feature type="intramembrane region" description="Helical; Pore-forming" evidence="1">
    <location>
        <begin position="585"/>
        <end position="600"/>
    </location>
</feature>
<feature type="intramembrane region" evidence="1">
    <location>
        <begin position="601"/>
        <end position="603"/>
    </location>
</feature>
<feature type="topological domain" description="Cytoplasmic" evidence="1">
    <location>
        <begin position="604"/>
        <end position="609"/>
    </location>
</feature>
<feature type="transmembrane region" description="Helical" evidence="1">
    <location>
        <begin position="610"/>
        <end position="630"/>
    </location>
</feature>
<feature type="topological domain" description="Extracellular" evidence="1">
    <location>
        <begin position="631"/>
        <end position="805"/>
    </location>
</feature>
<feature type="transmembrane region" description="Helical; Name=M4">
    <location>
        <begin position="806"/>
        <end position="826"/>
    </location>
</feature>
<feature type="topological domain" description="Cytoplasmic" evidence="1">
    <location>
        <begin position="827"/>
        <end position="906"/>
    </location>
</feature>
<feature type="region of interest" description="Disordered" evidence="6">
    <location>
        <begin position="861"/>
        <end position="880"/>
    </location>
</feature>
<feature type="short sequence motif" description="PDZ-binding">
    <location>
        <begin position="903"/>
        <end position="906"/>
    </location>
</feature>
<feature type="binding site" evidence="4">
    <location>
        <position position="492"/>
    </location>
    <ligand>
        <name>L-glutamate</name>
        <dbReference type="ChEBI" id="CHEBI:29985"/>
    </ligand>
</feature>
<feature type="binding site" evidence="4">
    <location>
        <position position="494"/>
    </location>
    <ligand>
        <name>L-glutamate</name>
        <dbReference type="ChEBI" id="CHEBI:29985"/>
    </ligand>
</feature>
<feature type="binding site" evidence="4">
    <location>
        <position position="499"/>
    </location>
    <ligand>
        <name>L-glutamate</name>
        <dbReference type="ChEBI" id="CHEBI:29985"/>
    </ligand>
</feature>
<feature type="binding site" evidence="4">
    <location>
        <position position="668"/>
    </location>
    <ligand>
        <name>L-glutamate</name>
        <dbReference type="ChEBI" id="CHEBI:29985"/>
    </ligand>
</feature>
<feature type="binding site" evidence="4">
    <location>
        <position position="669"/>
    </location>
    <ligand>
        <name>L-glutamate</name>
        <dbReference type="ChEBI" id="CHEBI:29985"/>
    </ligand>
</feature>
<feature type="binding site" evidence="4">
    <location>
        <position position="719"/>
    </location>
    <ligand>
        <name>L-glutamate</name>
        <dbReference type="ChEBI" id="CHEBI:29985"/>
    </ligand>
</feature>
<feature type="modified residue" description="Phosphoserine" evidence="2">
    <location>
        <position position="645"/>
    </location>
</feature>
<feature type="modified residue" description="Phosphoserine" evidence="2">
    <location>
        <position position="710"/>
    </location>
</feature>
<feature type="modified residue" description="Phosphoserine" evidence="2">
    <location>
        <position position="849"/>
    </location>
</feature>
<feature type="modified residue" description="Phosphoserine" evidence="2">
    <location>
        <position position="863"/>
    </location>
</feature>
<feature type="lipid moiety-binding region" description="S-palmitoyl cysteine" evidence="13">
    <location>
        <position position="603"/>
    </location>
</feature>
<feature type="lipid moiety-binding region" description="S-palmitoyl cysteine" evidence="1">
    <location>
        <position position="829"/>
    </location>
</feature>
<feature type="glycosylation site" description="N-linked (GlcNAc...) asparagine" evidence="5">
    <location>
        <position position="63"/>
    </location>
</feature>
<feature type="glycosylation site" description="N-linked (GlcNAc...) asparagine" evidence="5">
    <location>
        <position position="249"/>
    </location>
</feature>
<feature type="glycosylation site" description="N-linked (GlcNAc...) asparagine" evidence="5">
    <location>
        <position position="257"/>
    </location>
</feature>
<feature type="glycosylation site" description="N-linked (GlcNAc...) asparagine" evidence="5">
    <location>
        <position position="363"/>
    </location>
</feature>
<feature type="glycosylation site" description="N-linked (GlcNAc...) asparagine" evidence="5">
    <location>
        <position position="401"/>
    </location>
</feature>
<feature type="glycosylation site" description="N-linked (GlcNAc...) asparagine" evidence="5">
    <location>
        <position position="406"/>
    </location>
</feature>
<feature type="disulfide bond" evidence="3">
    <location>
        <begin position="75"/>
        <end position="323"/>
    </location>
</feature>
<feature type="disulfide bond" evidence="3">
    <location>
        <begin position="732"/>
        <end position="787"/>
    </location>
</feature>
<feature type="splice variant" id="VSP_045119" description="In isoform 4." evidence="16">
    <location>
        <begin position="1"/>
        <end position="69"/>
    </location>
</feature>
<feature type="splice variant" id="VSP_047024" description="In isoform 5 and isoform 6." evidence="16">
    <original>MQHIFAFFCTGFLGAVVGANFPNNIQIG</original>
    <variation>MCCSTHLFQPLQLAGGLEWPWSNLLCFLTPVKLHPEVW</variation>
    <location>
        <begin position="1"/>
        <end position="28"/>
    </location>
</feature>
<feature type="splice variant" id="VSP_045120" description="In isoform 3." evidence="16">
    <original>FCSQFSKGVYAIFGFYERRTVNMLTSFCGALHVCFITPSFPVDTSNQFVLQLRPELQDALISIIDHYKWQKFVYIYDADRG</original>
    <variation>C</variation>
    <location>
        <begin position="74"/>
        <end position="154"/>
    </location>
</feature>
<feature type="splice variant" id="VSP_053349" description="In isoform Flip and isoform 6." evidence="16 17">
    <original>NPVNLAVLKLNEQGLLDKLKNKWWYDKGECGSGGGD</original>
    <variation>GPVNLAVLKLSEQGVLDKLKSKWWYDKGECGSKDSG</variation>
    <location>
        <begin position="758"/>
        <end position="793"/>
    </location>
</feature>
<feature type="sequence variant" id="VAR_087404" description="In MRD67; uncertain significance; no effect on localization to the cell membrane; does not affect AMPA glutamate receptor activity; dbSNP:rs142859488." evidence="14">
    <original>R</original>
    <variation>Q</variation>
    <location>
        <position position="345"/>
    </location>
</feature>
<feature type="sequence variant" id="VAR_087405" description="In MRT76; loss of expression; loss of AMPA glutamate receptor activity." evidence="14">
    <location>
        <begin position="377"/>
        <end position="906"/>
    </location>
</feature>
<feature type="sequence variant" id="VAR_028071" description="In dbSNP:rs13166146.">
    <original>D</original>
    <variation>N</variation>
    <location>
        <position position="487"/>
    </location>
</feature>
<feature type="sequence variant" id="VAR_028072" description="In dbSNP:rs13166161.">
    <original>P</original>
    <variation>T</variation>
    <location>
        <position position="521"/>
    </location>
</feature>
<feature type="sequence variant" id="VAR_028073" description="In dbSNP:rs13166438.">
    <original>A</original>
    <variation>S</variation>
    <location>
        <position position="536"/>
    </location>
</feature>
<feature type="sequence variant" id="VAR_028074" description="In dbSNP:rs13186241.">
    <original>I</original>
    <variation>M</variation>
    <location>
        <position position="548"/>
    </location>
</feature>
<feature type="sequence variant" id="VAR_028075" description="In dbSNP:rs13186534.">
    <original>F</original>
    <variation>L</variation>
    <location>
        <position position="588"/>
    </location>
</feature>
<feature type="sequence variant" id="VAR_087406" description="In MRD67; decreased AMPA glutamate receptor activity; no effect on localization to the cell membrane." evidence="14">
    <original>I</original>
    <variation>T</variation>
    <location>
        <position position="627"/>
    </location>
</feature>
<feature type="sequence variant" id="VAR_078689" description="In MRD67; increased AMPA glutamate receptor activity; increased sensitivity towards L-glutamate; no effect on localization to the cell membrane; dbSNP:rs587776937." evidence="10 12 14">
    <original>A</original>
    <variation>T</variation>
    <location>
        <position position="636"/>
    </location>
</feature>
<feature type="sequence variant" id="VAR_087407" description="In MRD67; decreased AMPA glutamate receptor activity; no effect on localization to the cell membrane; dbSNP:rs1561846159." evidence="14">
    <original>G</original>
    <variation>D</variation>
    <location>
        <position position="745"/>
    </location>
</feature>
<feature type="sequence conflict" description="In Ref. 2; CAA41491." evidence="18" ref="2">
    <original>R</original>
    <variation>A</variation>
    <location>
        <position position="345"/>
    </location>
</feature>
<feature type="sequence conflict" description="In Ref. 3; AAA58395." evidence="18" ref="3">
    <original>G</original>
    <variation>S</variation>
    <location>
        <position position="375"/>
    </location>
</feature>
<feature type="sequence conflict" description="In Ref. 4; BAH12004." evidence="18" ref="4">
    <original>G</original>
    <variation>E</variation>
    <location>
        <position position="738"/>
    </location>
</feature>
<feature type="sequence conflict" description="In Ref. 1; AAA58613." evidence="18" ref="1">
    <original>S</original>
    <variation>SA</variation>
    <location>
        <position position="863"/>
    </location>
</feature>
<feature type="sequence conflict" description="In Ref. 1; AAA58613." evidence="18" ref="1">
    <original>AGA</original>
    <variation>TAP</variation>
    <location>
        <begin position="865"/>
        <end position="867"/>
    </location>
</feature>
<feature type="helix" evidence="20">
    <location>
        <begin position="837"/>
        <end position="840"/>
    </location>
</feature>
<reference key="1">
    <citation type="journal article" date="1991" name="Proc. Natl. Acad. Sci. U.S.A.">
        <title>Molecular cloning and chromosomal localization of one of the human glutamate receptor genes.</title>
        <authorList>
            <person name="Puckett C."/>
            <person name="Gomez C.M."/>
            <person name="Korenberg J.R."/>
            <person name="Tung H."/>
            <person name="Meier T.J."/>
            <person name="Chen X.N."/>
            <person name="Hood L.E."/>
        </authorList>
    </citation>
    <scope>NUCLEOTIDE SEQUENCE [MRNA] (ISOFORM FLIP)</scope>
</reference>
<reference key="2">
    <citation type="journal article" date="1992" name="DNA Seq.">
        <title>The human glutamate receptor cDNA GluR1: cloning, sequencing, expression and localization to chromosome 5.</title>
        <authorList>
            <person name="Potier M.-C."/>
            <person name="Spillantini M.G."/>
            <person name="Carter N.P."/>
        </authorList>
    </citation>
    <scope>NUCLEOTIDE SEQUENCE [MRNA] (ISOFORM FLOP)</scope>
    <source>
        <tissue>Hippocampus</tissue>
    </source>
</reference>
<reference key="3">
    <citation type="journal article" date="1992" name="Proc. Natl. Acad. Sci. U.S.A.">
        <title>Molecular cloning, chromosomal mapping, and functional expression of human brain glutamate receptors.</title>
        <authorList>
            <person name="Sun W."/>
            <person name="Ferrer-Montiel A.V."/>
            <person name="Schinder A.F."/>
            <person name="McPherson J.P."/>
            <person name="Evans G.A."/>
            <person name="Montal M."/>
        </authorList>
    </citation>
    <scope>NUCLEOTIDE SEQUENCE [MRNA] (ISOFORM FLOP)</scope>
    <scope>FUNCTION</scope>
</reference>
<reference key="4">
    <citation type="journal article" date="2004" name="Nat. Genet.">
        <title>Complete sequencing and characterization of 21,243 full-length human cDNAs.</title>
        <authorList>
            <person name="Ota T."/>
            <person name="Suzuki Y."/>
            <person name="Nishikawa T."/>
            <person name="Otsuki T."/>
            <person name="Sugiyama T."/>
            <person name="Irie R."/>
            <person name="Wakamatsu A."/>
            <person name="Hayashi K."/>
            <person name="Sato H."/>
            <person name="Nagai K."/>
            <person name="Kimura K."/>
            <person name="Makita H."/>
            <person name="Sekine M."/>
            <person name="Obayashi M."/>
            <person name="Nishi T."/>
            <person name="Shibahara T."/>
            <person name="Tanaka T."/>
            <person name="Ishii S."/>
            <person name="Yamamoto J."/>
            <person name="Saito K."/>
            <person name="Kawai Y."/>
            <person name="Isono Y."/>
            <person name="Nakamura Y."/>
            <person name="Nagahari K."/>
            <person name="Murakami K."/>
            <person name="Yasuda T."/>
            <person name="Iwayanagi T."/>
            <person name="Wagatsuma M."/>
            <person name="Shiratori A."/>
            <person name="Sudo H."/>
            <person name="Hosoiri T."/>
            <person name="Kaku Y."/>
            <person name="Kodaira H."/>
            <person name="Kondo H."/>
            <person name="Sugawara M."/>
            <person name="Takahashi M."/>
            <person name="Kanda K."/>
            <person name="Yokoi T."/>
            <person name="Furuya T."/>
            <person name="Kikkawa E."/>
            <person name="Omura Y."/>
            <person name="Abe K."/>
            <person name="Kamihara K."/>
            <person name="Katsuta N."/>
            <person name="Sato K."/>
            <person name="Tanikawa M."/>
            <person name="Yamazaki M."/>
            <person name="Ninomiya K."/>
            <person name="Ishibashi T."/>
            <person name="Yamashita H."/>
            <person name="Murakawa K."/>
            <person name="Fujimori K."/>
            <person name="Tanai H."/>
            <person name="Kimata M."/>
            <person name="Watanabe M."/>
            <person name="Hiraoka S."/>
            <person name="Chiba Y."/>
            <person name="Ishida S."/>
            <person name="Ono Y."/>
            <person name="Takiguchi S."/>
            <person name="Watanabe S."/>
            <person name="Yosida M."/>
            <person name="Hotuta T."/>
            <person name="Kusano J."/>
            <person name="Kanehori K."/>
            <person name="Takahashi-Fujii A."/>
            <person name="Hara H."/>
            <person name="Tanase T.-O."/>
            <person name="Nomura Y."/>
            <person name="Togiya S."/>
            <person name="Komai F."/>
            <person name="Hara R."/>
            <person name="Takeuchi K."/>
            <person name="Arita M."/>
            <person name="Imose N."/>
            <person name="Musashino K."/>
            <person name="Yuuki H."/>
            <person name="Oshima A."/>
            <person name="Sasaki N."/>
            <person name="Aotsuka S."/>
            <person name="Yoshikawa Y."/>
            <person name="Matsunawa H."/>
            <person name="Ichihara T."/>
            <person name="Shiohata N."/>
            <person name="Sano S."/>
            <person name="Moriya S."/>
            <person name="Momiyama H."/>
            <person name="Satoh N."/>
            <person name="Takami S."/>
            <person name="Terashima Y."/>
            <person name="Suzuki O."/>
            <person name="Nakagawa S."/>
            <person name="Senoh A."/>
            <person name="Mizoguchi H."/>
            <person name="Goto Y."/>
            <person name="Shimizu F."/>
            <person name="Wakebe H."/>
            <person name="Hishigaki H."/>
            <person name="Watanabe T."/>
            <person name="Sugiyama A."/>
            <person name="Takemoto M."/>
            <person name="Kawakami B."/>
            <person name="Yamazaki M."/>
            <person name="Watanabe K."/>
            <person name="Kumagai A."/>
            <person name="Itakura S."/>
            <person name="Fukuzumi Y."/>
            <person name="Fujimori Y."/>
            <person name="Komiyama M."/>
            <person name="Tashiro H."/>
            <person name="Tanigami A."/>
            <person name="Fujiwara T."/>
            <person name="Ono T."/>
            <person name="Yamada K."/>
            <person name="Fujii Y."/>
            <person name="Ozaki K."/>
            <person name="Hirao M."/>
            <person name="Ohmori Y."/>
            <person name="Kawabata A."/>
            <person name="Hikiji T."/>
            <person name="Kobatake N."/>
            <person name="Inagaki H."/>
            <person name="Ikema Y."/>
            <person name="Okamoto S."/>
            <person name="Okitani R."/>
            <person name="Kawakami T."/>
            <person name="Noguchi S."/>
            <person name="Itoh T."/>
            <person name="Shigeta K."/>
            <person name="Senba T."/>
            <person name="Matsumura K."/>
            <person name="Nakajima Y."/>
            <person name="Mizuno T."/>
            <person name="Morinaga M."/>
            <person name="Sasaki M."/>
            <person name="Togashi T."/>
            <person name="Oyama M."/>
            <person name="Hata H."/>
            <person name="Watanabe M."/>
            <person name="Komatsu T."/>
            <person name="Mizushima-Sugano J."/>
            <person name="Satoh T."/>
            <person name="Shirai Y."/>
            <person name="Takahashi Y."/>
            <person name="Nakagawa K."/>
            <person name="Okumura K."/>
            <person name="Nagase T."/>
            <person name="Nomura N."/>
            <person name="Kikuchi H."/>
            <person name="Masuho Y."/>
            <person name="Yamashita R."/>
            <person name="Nakai K."/>
            <person name="Yada T."/>
            <person name="Nakamura Y."/>
            <person name="Ohara O."/>
            <person name="Isogai T."/>
            <person name="Sugano S."/>
        </authorList>
    </citation>
    <scope>NUCLEOTIDE SEQUENCE [LARGE SCALE MRNA] (ISOFORMS 3; 4; 5 AND 6)</scope>
    <source>
        <tissue>Brain</tissue>
        <tissue>Cerebellum</tissue>
        <tissue>Hippocampus</tissue>
    </source>
</reference>
<reference key="5">
    <citation type="journal article" date="2004" name="Nature">
        <title>The DNA sequence and comparative analysis of human chromosome 5.</title>
        <authorList>
            <person name="Schmutz J."/>
            <person name="Martin J."/>
            <person name="Terry A."/>
            <person name="Couronne O."/>
            <person name="Grimwood J."/>
            <person name="Lowry S."/>
            <person name="Gordon L.A."/>
            <person name="Scott D."/>
            <person name="Xie G."/>
            <person name="Huang W."/>
            <person name="Hellsten U."/>
            <person name="Tran-Gyamfi M."/>
            <person name="She X."/>
            <person name="Prabhakar S."/>
            <person name="Aerts A."/>
            <person name="Altherr M."/>
            <person name="Bajorek E."/>
            <person name="Black S."/>
            <person name="Branscomb E."/>
            <person name="Caoile C."/>
            <person name="Challacombe J.F."/>
            <person name="Chan Y.M."/>
            <person name="Denys M."/>
            <person name="Detter J.C."/>
            <person name="Escobar J."/>
            <person name="Flowers D."/>
            <person name="Fotopulos D."/>
            <person name="Glavina T."/>
            <person name="Gomez M."/>
            <person name="Gonzales E."/>
            <person name="Goodstein D."/>
            <person name="Grigoriev I."/>
            <person name="Groza M."/>
            <person name="Hammon N."/>
            <person name="Hawkins T."/>
            <person name="Haydu L."/>
            <person name="Israni S."/>
            <person name="Jett J."/>
            <person name="Kadner K."/>
            <person name="Kimball H."/>
            <person name="Kobayashi A."/>
            <person name="Lopez F."/>
            <person name="Lou Y."/>
            <person name="Martinez D."/>
            <person name="Medina C."/>
            <person name="Morgan J."/>
            <person name="Nandkeshwar R."/>
            <person name="Noonan J.P."/>
            <person name="Pitluck S."/>
            <person name="Pollard M."/>
            <person name="Predki P."/>
            <person name="Priest J."/>
            <person name="Ramirez L."/>
            <person name="Retterer J."/>
            <person name="Rodriguez A."/>
            <person name="Rogers S."/>
            <person name="Salamov A."/>
            <person name="Salazar A."/>
            <person name="Thayer N."/>
            <person name="Tice H."/>
            <person name="Tsai M."/>
            <person name="Ustaszewska A."/>
            <person name="Vo N."/>
            <person name="Wheeler J."/>
            <person name="Wu K."/>
            <person name="Yang J."/>
            <person name="Dickson M."/>
            <person name="Cheng J.-F."/>
            <person name="Eichler E.E."/>
            <person name="Olsen A."/>
            <person name="Pennacchio L.A."/>
            <person name="Rokhsar D.S."/>
            <person name="Richardson P."/>
            <person name="Lucas S.M."/>
            <person name="Myers R.M."/>
            <person name="Rubin E.M."/>
        </authorList>
    </citation>
    <scope>NUCLEOTIDE SEQUENCE [LARGE SCALE GENOMIC DNA]</scope>
</reference>
<reference key="6">
    <citation type="submission" date="2005-09" db="EMBL/GenBank/DDBJ databases">
        <authorList>
            <person name="Mural R.J."/>
            <person name="Istrail S."/>
            <person name="Sutton G.G."/>
            <person name="Florea L."/>
            <person name="Halpern A.L."/>
            <person name="Mobarry C.M."/>
            <person name="Lippert R."/>
            <person name="Walenz B."/>
            <person name="Shatkay H."/>
            <person name="Dew I."/>
            <person name="Miller J.R."/>
            <person name="Flanigan M.J."/>
            <person name="Edwards N.J."/>
            <person name="Bolanos R."/>
            <person name="Fasulo D."/>
            <person name="Halldorsson B.V."/>
            <person name="Hannenhalli S."/>
            <person name="Turner R."/>
            <person name="Yooseph S."/>
            <person name="Lu F."/>
            <person name="Nusskern D.R."/>
            <person name="Shue B.C."/>
            <person name="Zheng X.H."/>
            <person name="Zhong F."/>
            <person name="Delcher A.L."/>
            <person name="Huson D.H."/>
            <person name="Kravitz S.A."/>
            <person name="Mouchard L."/>
            <person name="Reinert K."/>
            <person name="Remington K.A."/>
            <person name="Clark A.G."/>
            <person name="Waterman M.S."/>
            <person name="Eichler E.E."/>
            <person name="Adams M.D."/>
            <person name="Hunkapiller M.W."/>
            <person name="Myers E.W."/>
            <person name="Venter J.C."/>
        </authorList>
    </citation>
    <scope>NUCLEOTIDE SEQUENCE [LARGE SCALE GENOMIC DNA]</scope>
</reference>
<reference key="7">
    <citation type="journal article" date="2004" name="Genome Res.">
        <title>The status, quality, and expansion of the NIH full-length cDNA project: the Mammalian Gene Collection (MGC).</title>
        <authorList>
            <consortium name="The MGC Project Team"/>
        </authorList>
    </citation>
    <scope>NUCLEOTIDE SEQUENCE [LARGE SCALE MRNA] (ISOFORM FLOP)</scope>
</reference>
<reference key="8">
    <citation type="journal article" date="2010" name="Neuron">
        <title>Hippocampal AMPA receptor gating controlled by both TARP and cornichon proteins.</title>
        <authorList>
            <person name="Kato A.S."/>
            <person name="Gill M.B."/>
            <person name="Ho M.T."/>
            <person name="Yu H."/>
            <person name="Tu Y."/>
            <person name="Siuda E.R."/>
            <person name="Wang H."/>
            <person name="Qian Y.W."/>
            <person name="Nisenbaum E.S."/>
            <person name="Tomita S."/>
            <person name="Bredt D.S."/>
        </authorList>
    </citation>
    <scope>FUNCTION</scope>
</reference>
<reference key="9">
    <citation type="journal article" date="2010" name="Proc. Natl. Acad. Sci. U.S.A.">
        <title>Functional comparison of the effects of TARPs and cornichons on AMPA receptor trafficking and gating.</title>
        <authorList>
            <person name="Shi Y."/>
            <person name="Suh Y.H."/>
            <person name="Milstein A.D."/>
            <person name="Isozaki K."/>
            <person name="Schmid S.M."/>
            <person name="Roche K.W."/>
            <person name="Nicoll R.A."/>
        </authorList>
    </citation>
    <scope>FUNCTION</scope>
    <scope>INTERACTION WITH CNIH2 AND CACNG2</scope>
</reference>
<reference key="10">
    <citation type="journal article" date="2013" name="J. Neurosci.">
        <title>A eukaryotic specific transmembrane segment is required for tetramerization in AMPA receptors.</title>
        <authorList>
            <person name="Salussolia C.L."/>
            <person name="Gan Q."/>
            <person name="Kazi R."/>
            <person name="Singh P."/>
            <person name="Allopenna J."/>
            <person name="Furukawa H."/>
            <person name="Wollmuth L.P."/>
        </authorList>
    </citation>
    <scope>SUBUNIT</scope>
    <scope>SUBCELLULAR LOCATION</scope>
    <scope>DOMAIN</scope>
</reference>
<reference key="11">
    <citation type="journal article" date="2018" name="Front. Mol. Neurosci.">
        <title>Mechanisms of CPT1C-Dependent AMPAR Trafficking Enhancement.</title>
        <authorList>
            <person name="Gratacos-Batlle E."/>
            <person name="Olivella M."/>
            <person name="Sanchez-Fernandez N."/>
            <person name="Yefimenko N."/>
            <person name="Miguez-Cabello F."/>
            <person name="Fado R."/>
            <person name="Casals N."/>
            <person name="Gasull X."/>
            <person name="Ambrosio S."/>
            <person name="Soto D."/>
        </authorList>
    </citation>
    <scope>PALMITOYLATION AT CYS-603</scope>
</reference>
<reference key="12">
    <citation type="journal article" date="2012" name="N. Engl. J. Med.">
        <title>Diagnostic exome sequencing in persons with severe intellectual disability.</title>
        <authorList>
            <person name="de Ligt J."/>
            <person name="Willemsen M.H."/>
            <person name="van Bon B.W."/>
            <person name="Kleefstra T."/>
            <person name="Yntema H.G."/>
            <person name="Kroes T."/>
            <person name="Vulto-van Silfhout A.T."/>
            <person name="Koolen D.A."/>
            <person name="de Vries P."/>
            <person name="Gilissen C."/>
            <person name="del Rosario M."/>
            <person name="Hoischen A."/>
            <person name="Scheffer H."/>
            <person name="de Vries B.B."/>
            <person name="Brunner H.G."/>
            <person name="Veltman J.A."/>
            <person name="Vissers L.E."/>
        </authorList>
    </citation>
    <scope>VARIANT MRD67 THR-636</scope>
    <scope>INVOLVEMENT IN MRD67</scope>
</reference>
<reference key="13">
    <citation type="journal article" date="2017" name="Nat. Neurosci.">
        <title>Hotspots of missense mutation identify neurodevelopmental disorder genes and functional domains.</title>
        <authorList>
            <person name="Geisheker M.R."/>
            <person name="Heymann G."/>
            <person name="Wang T."/>
            <person name="Coe B.P."/>
            <person name="Turner T.N."/>
            <person name="Stessman H.A.F."/>
            <person name="Hoekzema K."/>
            <person name="Kvarnung M."/>
            <person name="Shaw M."/>
            <person name="Friend K."/>
            <person name="Liebelt J."/>
            <person name="Barnett C."/>
            <person name="Thompson E.M."/>
            <person name="Haan E."/>
            <person name="Guo H."/>
            <person name="Anderlid B.M."/>
            <person name="Nordgren A."/>
            <person name="Lindstrand A."/>
            <person name="Vandeweyer G."/>
            <person name="Alberti A."/>
            <person name="Avola E."/>
            <person name="Vinci M."/>
            <person name="Giusto S."/>
            <person name="Pramparo T."/>
            <person name="Pierce K."/>
            <person name="Nalabolu S."/>
            <person name="Michaelson J.J."/>
            <person name="Sedlacek Z."/>
            <person name="Santen G.W.E."/>
            <person name="Peeters H."/>
            <person name="Hakonarson H."/>
            <person name="Courchesne E."/>
            <person name="Romano C."/>
            <person name="Kooy R.F."/>
            <person name="Bernier R.A."/>
            <person name="Nordenskjoeld M."/>
            <person name="Gecz J."/>
            <person name="Xia K."/>
            <person name="Zweifel L.S."/>
            <person name="Eichler E.E."/>
        </authorList>
    </citation>
    <scope>VARIANT MRD67 THR-636</scope>
    <scope>CHARACTERIZATION OF VARIANT MRD67 THR-636</scope>
    <scope>INVOLVEMENT IN MRD67</scope>
    <scope>FUNCTION</scope>
</reference>
<reference key="14">
    <citation type="journal article" date="2022" name="Am. J. Hum. Genet.">
        <title>Identification and functional evaluation of GRIA1 missense and truncation variants in individuals with ID: An emerging neurodevelopmental syndrome.</title>
        <authorList>
            <person name="Ismail V."/>
            <person name="Zachariassen L.G."/>
            <person name="Godwin A."/>
            <person name="Sahakian M."/>
            <person name="Ellard S."/>
            <person name="Stals K.L."/>
            <person name="Baple E."/>
            <person name="Brown K.T."/>
            <person name="Foulds N."/>
            <person name="Wheway G."/>
            <person name="Parker M.O."/>
            <person name="Lyngby S.M."/>
            <person name="Pedersen M.G."/>
            <person name="Desir J."/>
            <person name="Bayat A."/>
            <person name="Musgaard M."/>
            <person name="Guille M."/>
            <person name="Kristensen A.S."/>
            <person name="Baralle D."/>
        </authorList>
    </citation>
    <scope>VARIANTS MRD67 GLN-345; THR-627; THR-636 AND ASP-745</scope>
    <scope>CHARACTERIZATION OF VARIANTS MRD67 GLN-345; THR-627; THR-636 AND ASP-745</scope>
    <scope>VARIANT MRT76 377-ARG--LEU-906 DEL</scope>
    <scope>CHARACTERIZATION OF VARIANT MRT76 377-ARG--LEU-906 DEL</scope>
    <scope>INVOLVEMENT IN MRT76</scope>
    <scope>FUNCTION</scope>
</reference>
<sequence>MQHIFAFFCTGFLGAVVGANFPNNIQIGGLFPNQQSQEHAAFRFALSQLTEPPKLLPQIDIVNISDSFEMTYRFCSQFSKGVYAIFGFYERRTVNMLTSFCGALHVCFITPSFPVDTSNQFVLQLRPELQDALISIIDHYKWQKFVYIYDADRGLSVLQKVLDTAAEKNWQVTAVNILTTTEEGYRMLFQDLEKKKERLVVVDCESERLNAILGQIIKLEKNGIGYHYILANLGFMDIDLNKFKESGANVTGFQLVNYTDTIPAKIMQQWKNSDARDHTRVDWKRPKYTSALTYDGVKVMAEAFQSLRRQRIDISRRGNAGDCLANPAVPWGQGIDIQRALQQVRFEGLTGNVQFNEKGRRTNYTLHVIEMKHDGIRKIGYWNEDDKFVPAATDAQAGGDNSSVQNRTYIVTTILEDPYVMLKKNANQFEGNDRYEGYCVELAAEIAKHVGYSYRLEIVSDGKYGARDPDTKAWNGMVGELVYGRADVAVAPLTITLVREEVIDFSKPFMSLGISIMIKKPQKSKPGVFSFLDPLAYEIWMCIVFAYIGVSVVLFLVSRFSPYEWHSEEFEEGRDQTTSDQSNEFGIFNSLWFSLGAFMQQGCDISPRSLSGRIVGGVWWFFTLIIISSYTANLAAFLTVERMVSPIESAEDLAKQTEIAYGTLEAGSTKEFFRRSKIAVFEKMWTYMKSAEPSVFVRTTEEGMIRVRKSKGKYAYLLESTMNEYIEQRKPCDTMKVGGNLDSKGYGIATPKGSALRNPVNLAVLKLNEQGLLDKLKNKWWYDKGECGSGGGDSKDKTSALSLSNVAGVFYILIGGLGLAMLVALIEFCYKSRSESKRMKGFCLIPQQSINEAIRTSTLPRNSGAGASSGGSGENGRVVSHDFPKSMQSIPCMSHSSGMPLGATGL</sequence>
<protein>
    <recommendedName>
        <fullName evidence="18">Glutamate receptor 1</fullName>
        <shortName>GluR-1</shortName>
    </recommendedName>
    <alternativeName>
        <fullName>AMPA-selective glutamate receptor 1</fullName>
    </alternativeName>
    <alternativeName>
        <fullName evidence="2">GluR-A</fullName>
    </alternativeName>
    <alternativeName>
        <fullName evidence="2">GluR-K1</fullName>
    </alternativeName>
    <alternativeName>
        <fullName>Glutamate receptor ionotropic, AMPA 1</fullName>
    </alternativeName>
</protein>
<evidence type="ECO:0000250" key="1"/>
<evidence type="ECO:0000250" key="2">
    <source>
        <dbReference type="UniProtKB" id="P19490"/>
    </source>
</evidence>
<evidence type="ECO:0000250" key="3">
    <source>
        <dbReference type="UniProtKB" id="P23818"/>
    </source>
</evidence>
<evidence type="ECO:0000250" key="4">
    <source>
        <dbReference type="UniProtKB" id="P42262"/>
    </source>
</evidence>
<evidence type="ECO:0000255" key="5"/>
<evidence type="ECO:0000256" key="6">
    <source>
        <dbReference type="SAM" id="MobiDB-lite"/>
    </source>
</evidence>
<evidence type="ECO:0000269" key="7">
    <source>
    </source>
</evidence>
<evidence type="ECO:0000269" key="8">
    <source>
    </source>
</evidence>
<evidence type="ECO:0000269" key="9">
    <source>
    </source>
</evidence>
<evidence type="ECO:0000269" key="10">
    <source>
    </source>
</evidence>
<evidence type="ECO:0000269" key="11">
    <source>
    </source>
</evidence>
<evidence type="ECO:0000269" key="12">
    <source>
    </source>
</evidence>
<evidence type="ECO:0000269" key="13">
    <source>
    </source>
</evidence>
<evidence type="ECO:0000269" key="14">
    <source>
    </source>
</evidence>
<evidence type="ECO:0000303" key="15">
    <source>
    </source>
</evidence>
<evidence type="ECO:0000303" key="16">
    <source>
    </source>
</evidence>
<evidence type="ECO:0000303" key="17">
    <source>
    </source>
</evidence>
<evidence type="ECO:0000305" key="18"/>
<evidence type="ECO:0000312" key="19">
    <source>
        <dbReference type="HGNC" id="HGNC:4571"/>
    </source>
</evidence>
<evidence type="ECO:0007829" key="20">
    <source>
        <dbReference type="PDB" id="6X5Q"/>
    </source>
</evidence>
<organism>
    <name type="scientific">Homo sapiens</name>
    <name type="common">Human</name>
    <dbReference type="NCBI Taxonomy" id="9606"/>
    <lineage>
        <taxon>Eukaryota</taxon>
        <taxon>Metazoa</taxon>
        <taxon>Chordata</taxon>
        <taxon>Craniata</taxon>
        <taxon>Vertebrata</taxon>
        <taxon>Euteleostomi</taxon>
        <taxon>Mammalia</taxon>
        <taxon>Eutheria</taxon>
        <taxon>Euarchontoglires</taxon>
        <taxon>Primates</taxon>
        <taxon>Haplorrhini</taxon>
        <taxon>Catarrhini</taxon>
        <taxon>Hominidae</taxon>
        <taxon>Homo</taxon>
    </lineage>
</organism>
<comment type="function">
    <text evidence="2 7 8 9 12 14">Ionotropic glutamate receptor that functions as a ligand-gated cation channel, gated by L-glutamate and glutamatergic agonists such as alpha-amino-3-hydroxy-5-methyl-4-isoxazolepropionic acid (AMPA), quisqualic acid, and kainic acid (PubMed:1311100, PubMed:20805473, PubMed:21172611, PubMed:28628100, PubMed:35675825). L-glutamate acts as an excitatory neurotransmitter at many synapses in the central nervous system. Binding of the excitatory neurotransmitter L-glutamate induces a conformation change, leading to the opening of the cation channel, and thereby converts the chemical signal to an electrical impulse upon entry of monovalent and divalent cations such as sodium and calcium. The receptor then desensitizes rapidly and enters in a transient inactive state, characterized by the presence of bound agonist (By similarity). In the presence of CACNG2 or CACNG4 or CACNG7 or CACNG8, shows resensitization which is characterized by a delayed accumulation of current flux upon continued application of L-glutamate (PubMed:21172611). Resensitization is blocked by CNIH2 through interaction with CACNG8 in the CACNG8-containing AMPA receptors complex (PubMed:21172611). Calcium (Ca(2+)) permeability depends on subunits composition and, heteromeric channels containing edited GRIA2 subunit are calcium-impermeable. Also permeable to other divalents cations such as strontium(2+) and magnesium(2+) and monovalent cations such as potassium(1+) and lithium(1+) (By similarity).</text>
</comment>
<comment type="catalytic activity">
    <reaction evidence="2">
        <text>Ca(2+)(in) = Ca(2+)(out)</text>
        <dbReference type="Rhea" id="RHEA:29671"/>
        <dbReference type="ChEBI" id="CHEBI:29108"/>
    </reaction>
</comment>
<comment type="catalytic activity">
    <reaction evidence="2">
        <text>Na(+)(in) = Na(+)(out)</text>
        <dbReference type="Rhea" id="RHEA:34963"/>
        <dbReference type="ChEBI" id="CHEBI:29101"/>
    </reaction>
</comment>
<comment type="catalytic activity">
    <reaction evidence="2">
        <text>Mg(2+)(in) = Mg(2+)(out)</text>
        <dbReference type="Rhea" id="RHEA:29827"/>
        <dbReference type="ChEBI" id="CHEBI:18420"/>
    </reaction>
</comment>
<comment type="catalytic activity">
    <reaction evidence="2">
        <text>Li(+)(in) = Li(+)(out)</text>
        <dbReference type="Rhea" id="RHEA:78551"/>
        <dbReference type="ChEBI" id="CHEBI:49713"/>
    </reaction>
</comment>
<comment type="catalytic activity">
    <reaction evidence="2">
        <text>K(+)(in) = K(+)(out)</text>
        <dbReference type="Rhea" id="RHEA:29463"/>
        <dbReference type="ChEBI" id="CHEBI:29103"/>
    </reaction>
</comment>
<comment type="catalytic activity">
    <reaction evidence="2">
        <text>Sr(2+)(in) = Sr(2+)(out)</text>
        <dbReference type="Rhea" id="RHEA:78679"/>
        <dbReference type="ChEBI" id="CHEBI:35104"/>
    </reaction>
</comment>
<comment type="subunit">
    <text evidence="2 3 8 11">Homotetramer or heterotetramer of pore-forming glutamate receptor subunits; heteromeric assembly can be the result of both receptor subtype and flip or flop form and according the composition, one partner can be dominant with respect to the fast desensitizing current component, whereas the other can determine the steady-state component (By similarity). Tetramers may be formed by the dimerization of dimers (PubMed:23739980). Found in a complex with GRIA2, GRIA3, GRIA4, CNIH2, CNIH3, CACNG2, CACNG3, CACNG4, CACNG5, CACNG7 and CACNG8 (By similarity). Interacts with HIP1 and RASGRF2. Interacts with SYNDIG1 and GRIA2 (By similarity). Interacts with DLG1 (via C-terminus). Interacts with LRFN1. Interacts with PRKG2. Interacts with CNIH2 and CACNG2 (PubMed:20805473). Interacts with CACNG5; this interaction modulates the gating. Interacts (via C-terminus) with PDLIM4 (via LIM domain); this interaction as well as the interaction of PDLIM4 with alpha-actinin is required for their colocalization in early endosomes (By similarity). Interacts with SNX27 (via PDZ domain); the interaction is required for recycling to the plasma membrane when endocytosed and prevent degradation in lysosomes. Interacts (via PDZ-binding motif) with SHANK3 (via PDZ domain) (By similarity). Interacts with CACNG3; associates GRIA1 with the adapter protein complex 4 (AP-4) to target GRIA1 to the somatodendritic compartment of neurons (By similarity). Interacts with CACNG2; this interaction mediates traffick to the plasma membrane and modulation of desensitization. Interacts with CNIH2 and CNIH3; this interaction promotes expression at the plasma membrane and extensively modulates their gating properties by slowing deactivation and desensitization kinetics (By similarity). Found in a complex with GRIA2, GRIA3, GRIA4, DLG4, CACNG8 and CNIH2 (By similarity).</text>
</comment>
<comment type="interaction">
    <interactant intactId="EBI-6980805">
        <id>P42261</id>
    </interactant>
    <interactant intactId="EBI-10254793">
        <id>Q6XD76</id>
        <label>ASCL4</label>
    </interactant>
    <organismsDiffer>false</organismsDiffer>
    <experiments>3</experiments>
</comment>
<comment type="interaction">
    <interactant intactId="EBI-6980805">
        <id>P42261</id>
    </interactant>
    <interactant intactId="EBI-949378">
        <id>Q14457</id>
        <label>BECN1</label>
    </interactant>
    <organismsDiffer>false</organismsDiffer>
    <experiments>3</experiments>
</comment>
<comment type="interaction">
    <interactant intactId="EBI-6980805">
        <id>P42261</id>
    </interactant>
    <interactant intactId="EBI-2796400">
        <id>Q9UIH9</id>
        <label>KLF15</label>
    </interactant>
    <organismsDiffer>false</organismsDiffer>
    <experiments>3</experiments>
</comment>
<comment type="interaction">
    <interactant intactId="EBI-6980805">
        <id>P42261</id>
    </interactant>
    <interactant intactId="EBI-722234">
        <id>Q15907</id>
        <label>RAB11B</label>
    </interactant>
    <organismsDiffer>false</organismsDiffer>
    <experiments>3</experiments>
</comment>
<comment type="interaction">
    <interactant intactId="EBI-6980805">
        <id>P42261</id>
    </interactant>
    <interactant intactId="EBI-749023">
        <id>Q9UNY5</id>
        <label>ZNF232</label>
    </interactant>
    <organismsDiffer>false</organismsDiffer>
    <experiments>3</experiments>
</comment>
<comment type="subcellular location">
    <subcellularLocation>
        <location evidence="11">Cell membrane</location>
        <topology evidence="11">Multi-pass membrane protein</topology>
    </subcellularLocation>
    <subcellularLocation>
        <location evidence="2">Endoplasmic reticulum membrane</location>
        <topology evidence="2">Multi-pass membrane protein</topology>
    </subcellularLocation>
    <subcellularLocation>
        <location evidence="11">Postsynaptic cell membrane</location>
        <topology evidence="11">Multi-pass membrane protein</topology>
    </subcellularLocation>
    <subcellularLocation>
        <location evidence="3">Postsynaptic density membrane</location>
        <topology evidence="3">Multi-pass membrane protein</topology>
    </subcellularLocation>
    <subcellularLocation>
        <location evidence="3">Cell projection</location>
        <location evidence="3">Dendrite</location>
    </subcellularLocation>
    <subcellularLocation>
        <location evidence="3">Cell projection</location>
        <location evidence="3">Dendritic spine</location>
    </subcellularLocation>
    <subcellularLocation>
        <location evidence="2">Early endosome membrane</location>
        <topology evidence="2">Multi-pass membrane protein</topology>
    </subcellularLocation>
    <subcellularLocation>
        <location evidence="2">Recycling endosome membrane</location>
        <topology evidence="2">Multi-pass membrane protein</topology>
    </subcellularLocation>
    <subcellularLocation>
        <location evidence="3">Presynapse</location>
    </subcellularLocation>
    <subcellularLocation>
        <location evidence="3">Synapse</location>
    </subcellularLocation>
    <text evidence="2 3">Interaction with CACNG2, CNIH2 and CNIH3 promotes cell surface expression. Colocalizes with PDLIM4 in early endosomes. Displays a somatodendritic localization and is excluded from axons in neurons (By similarity). Localized to cone photoreceptor pedicles (By similarity).</text>
</comment>
<comment type="alternative products">
    <event type="alternative splicing"/>
    <isoform>
        <id>P42261-1</id>
        <name>Flop</name>
        <sequence type="displayed"/>
    </isoform>
    <isoform>
        <id>P42261-2</id>
        <name>Flip</name>
        <sequence type="described" ref="VSP_053349"/>
    </isoform>
    <isoform>
        <id>P42261-3</id>
        <name>3</name>
        <sequence type="described" ref="VSP_045120"/>
    </isoform>
    <isoform>
        <id>P42261-4</id>
        <name>4</name>
        <sequence type="described" ref="VSP_045119"/>
    </isoform>
    <isoform>
        <id>P42261-5</id>
        <name>5</name>
        <sequence type="described" ref="VSP_047024"/>
    </isoform>
    <isoform>
        <id>P42261-6</id>
        <name>6</name>
        <sequence type="described" ref="VSP_047024 VSP_053349"/>
    </isoform>
</comment>
<comment type="tissue specificity">
    <text>Widely expressed in brain.</text>
</comment>
<comment type="domain">
    <text evidence="11">The M4 transmembrane segment mediates tetramerization and is required for cell surface expression.</text>
</comment>
<comment type="PTM">
    <text evidence="3 13">Palmitoylated. Depalmitoylated by CPT1C and upon L-glutamate stimulation (PubMed:30135643). ZDHHC3/GODZ specifically palmitoylates Cys-603, which leads to Golgi retention and decreased cell surface expression (PubMed:30135643). In contrast, Cys-829 palmitoylation does not affect cell surface expression but regulates stimulation-dependent endocytosis (By similarity).</text>
</comment>
<comment type="PTM">
    <text evidence="2 3">Phosphorylated at Ser-645. Phosphorylated at Ser-710 by PKC. Phosphorylated at Ser-849 by PKC, PKA and CAMK2. Phosphorylated at Ser-863 by PKC, PKA and PRKG2 (By similarity). Phosphorylation of Ser-863 is reduced by induction of long-term depression and increased by induction of long-term potentiation (By similarity).</text>
</comment>
<comment type="disease" evidence="10 12 14">
    <disease id="DI-06444">
        <name>Intellectual developmental disorder, autosomal dominant 67</name>
        <acronym>MRD67</acronym>
        <description>An autosomal dominant disorder characterized by global development delay and impaired intellectual development apparent from infancy or early childhood. Additional features may include behavioral abnormalities, and language and sleeping difficulties.</description>
        <dbReference type="MIM" id="619927"/>
    </disease>
    <text>The disease is caused by variants affecting the gene represented in this entry.</text>
</comment>
<comment type="disease" evidence="14">
    <disease id="DI-06445">
        <name>Intellectual developmental disorder, autosomal recessive 76</name>
        <acronym>MRT76</acronym>
        <description>An autosomal recessive disorder characterized by global developmental delay, severely impaired intellectual development, absent speech, seizures, sleep disturbances, and feeding difficulties.</description>
        <dbReference type="MIM" id="619931"/>
    </disease>
    <text>The disease is caused by variants affecting the gene represented in this entry.</text>
</comment>
<comment type="miscellaneous">
    <text evidence="7">The postsynaptic actions of L-glutamate are mediated by a variety of receptors that are named according to their selective agonists (PubMed:1311100). This receptor binds AMPA (quisqualate) &gt; L-glutamate &gt; kainate (PubMed:1311100).</text>
</comment>
<comment type="similarity">
    <text evidence="18">Belongs to the glutamate-gated ion channel (TC 1.A.10.1) family. GRIA1 subfamily.</text>
</comment>
<name>GRIA1_HUMAN</name>
<dbReference type="EMBL" id="M64752">
    <property type="protein sequence ID" value="AAA58613.1"/>
    <property type="molecule type" value="mRNA"/>
</dbReference>
<dbReference type="EMBL" id="X58633">
    <property type="protein sequence ID" value="CAA41491.1"/>
    <property type="molecule type" value="mRNA"/>
</dbReference>
<dbReference type="EMBL" id="M81886">
    <property type="protein sequence ID" value="AAA58395.1"/>
    <property type="molecule type" value="mRNA"/>
</dbReference>
<dbReference type="EMBL" id="AK295039">
    <property type="protein sequence ID" value="BAH11956.1"/>
    <property type="molecule type" value="mRNA"/>
</dbReference>
<dbReference type="EMBL" id="AK295184">
    <property type="protein sequence ID" value="BAH12004.1"/>
    <property type="molecule type" value="mRNA"/>
</dbReference>
<dbReference type="EMBL" id="AK295827">
    <property type="protein sequence ID" value="BAH12192.1"/>
    <property type="molecule type" value="mRNA"/>
</dbReference>
<dbReference type="EMBL" id="AK315934">
    <property type="protein sequence ID" value="BAH14305.1"/>
    <property type="molecule type" value="mRNA"/>
</dbReference>
<dbReference type="EMBL" id="AC010613">
    <property type="status" value="NOT_ANNOTATED_CDS"/>
    <property type="molecule type" value="Genomic_DNA"/>
</dbReference>
<dbReference type="EMBL" id="AC025156">
    <property type="status" value="NOT_ANNOTATED_CDS"/>
    <property type="molecule type" value="Genomic_DNA"/>
</dbReference>
<dbReference type="EMBL" id="AC091960">
    <property type="status" value="NOT_ANNOTATED_CDS"/>
    <property type="molecule type" value="Genomic_DNA"/>
</dbReference>
<dbReference type="EMBL" id="AC091962">
    <property type="status" value="NOT_ANNOTATED_CDS"/>
    <property type="molecule type" value="Genomic_DNA"/>
</dbReference>
<dbReference type="EMBL" id="CH471062">
    <property type="protein sequence ID" value="EAW61649.1"/>
    <property type="molecule type" value="Genomic_DNA"/>
</dbReference>
<dbReference type="EMBL" id="CH471062">
    <property type="protein sequence ID" value="EAW61650.1"/>
    <property type="molecule type" value="Genomic_DNA"/>
</dbReference>
<dbReference type="EMBL" id="BC111734">
    <property type="protein sequence ID" value="AAI11735.1"/>
    <property type="molecule type" value="mRNA"/>
</dbReference>
<dbReference type="CCDS" id="CCDS4322.1">
    <molecule id="P42261-1"/>
</dbReference>
<dbReference type="CCDS" id="CCDS47318.1">
    <molecule id="P42261-2"/>
</dbReference>
<dbReference type="CCDS" id="CCDS58986.1">
    <molecule id="P42261-3"/>
</dbReference>
<dbReference type="CCDS" id="CCDS58987.1">
    <molecule id="P42261-5"/>
</dbReference>
<dbReference type="CCDS" id="CCDS58988.1">
    <molecule id="P42261-6"/>
</dbReference>
<dbReference type="CCDS" id="CCDS58989.1">
    <molecule id="P42261-4"/>
</dbReference>
<dbReference type="PIR" id="A40222">
    <property type="entry name" value="A40222"/>
</dbReference>
<dbReference type="PIR" id="A41273">
    <property type="entry name" value="A41273"/>
</dbReference>
<dbReference type="PIR" id="S25852">
    <property type="entry name" value="S25852"/>
</dbReference>
<dbReference type="PIR" id="S38723">
    <property type="entry name" value="S38723"/>
</dbReference>
<dbReference type="RefSeq" id="NP_000818.2">
    <molecule id="P42261-1"/>
    <property type="nucleotide sequence ID" value="NM_000827.4"/>
</dbReference>
<dbReference type="RefSeq" id="NP_001107655.1">
    <molecule id="P42261-2"/>
    <property type="nucleotide sequence ID" value="NM_001114183.2"/>
</dbReference>
<dbReference type="RefSeq" id="NP_001244948.1">
    <molecule id="P42261-3"/>
    <property type="nucleotide sequence ID" value="NM_001258019.2"/>
</dbReference>
<dbReference type="RefSeq" id="NP_001244950.1">
    <molecule id="P42261-5"/>
    <property type="nucleotide sequence ID" value="NM_001258021.2"/>
</dbReference>
<dbReference type="RefSeq" id="NP_001244951.1">
    <molecule id="P42261-6"/>
    <property type="nucleotide sequence ID" value="NM_001258022.2"/>
</dbReference>
<dbReference type="RefSeq" id="NP_001244952.1">
    <molecule id="P42261-4"/>
    <property type="nucleotide sequence ID" value="NM_001258023.1"/>
</dbReference>
<dbReference type="PDB" id="6X5Q">
    <property type="method" value="X-ray"/>
    <property type="resolution" value="2.14 A"/>
    <property type="chains" value="B=836-855"/>
</dbReference>
<dbReference type="PDBsum" id="6X5Q"/>
<dbReference type="SMR" id="P42261"/>
<dbReference type="BioGRID" id="109147">
    <property type="interactions" value="43"/>
</dbReference>
<dbReference type="ComplexPortal" id="CPX-8767">
    <property type="entry name" value="GluA1-GluA2 AMPA receptor complex"/>
</dbReference>
<dbReference type="CORUM" id="P42261"/>
<dbReference type="DIP" id="DIP-41487N"/>
<dbReference type="FunCoup" id="P42261">
    <property type="interactions" value="986"/>
</dbReference>
<dbReference type="IntAct" id="P42261">
    <property type="interactions" value="10"/>
</dbReference>
<dbReference type="MINT" id="P42261"/>
<dbReference type="STRING" id="9606.ENSP00000428994"/>
<dbReference type="BindingDB" id="P42261"/>
<dbReference type="ChEMBL" id="CHEMBL2009"/>
<dbReference type="DrugBank" id="DB02057">
    <property type="generic name" value="(S)-AMPA"/>
</dbReference>
<dbReference type="DrugBank" id="DB00237">
    <property type="generic name" value="Butabarbital"/>
</dbReference>
<dbReference type="DrugBank" id="DB05047">
    <property type="generic name" value="CX-717"/>
</dbReference>
<dbReference type="DrugBank" id="DB06247">
    <property type="generic name" value="CX516"/>
</dbReference>
<dbReference type="DrugBank" id="DB01189">
    <property type="generic name" value="Desflurane"/>
</dbReference>
<dbReference type="DrugBank" id="DB00898">
    <property type="generic name" value="Ethanol"/>
</dbReference>
<dbReference type="DrugBank" id="DB15012">
    <property type="generic name" value="Farampator"/>
</dbReference>
<dbReference type="DrugBank" id="DB03759">
    <property type="generic name" value="FG-9041"/>
</dbReference>
<dbReference type="DrugBank" id="DB13146">
    <property type="generic name" value="Fluciclovine (18F)"/>
</dbReference>
<dbReference type="DrugBank" id="DB02966">
    <property type="generic name" value="Fluoro-Willardiine"/>
</dbReference>
<dbReference type="DrugBank" id="DB00142">
    <property type="generic name" value="Glutamic acid"/>
</dbReference>
<dbReference type="DrugBank" id="DB00753">
    <property type="generic name" value="Isoflurane"/>
</dbReference>
<dbReference type="DrugBank" id="DB00555">
    <property type="generic name" value="Lamotrigine"/>
</dbReference>
<dbReference type="DrugBank" id="DB01028">
    <property type="generic name" value="Methoxyflurane"/>
</dbReference>
<dbReference type="DrugBank" id="DB08883">
    <property type="generic name" value="Perampanel"/>
</dbReference>
<dbReference type="DrugBank" id="DB01236">
    <property type="generic name" value="Sevoflurane"/>
</dbReference>
<dbReference type="DrugBank" id="DB04982">
    <property type="generic name" value="Talampanel"/>
</dbReference>
<dbReference type="DrugBank" id="DB09289">
    <property type="generic name" value="Tianeptine"/>
</dbReference>
<dbReference type="DrugBank" id="DB04129">
    <property type="generic name" value="Willardiine"/>
</dbReference>
<dbReference type="DrugCentral" id="P42261"/>
<dbReference type="GuidetoPHARMACOLOGY" id="444"/>
<dbReference type="TCDB" id="1.A.10.1.23">
    <property type="family name" value="the glutamate-gated ion channel (gic) family of neurotransmitter receptors"/>
</dbReference>
<dbReference type="GlyCosmos" id="P42261">
    <property type="glycosylation" value="8 sites, 2 glycans"/>
</dbReference>
<dbReference type="GlyGen" id="P42261">
    <property type="glycosylation" value="8 sites, 2 O-linked glycans (2 sites)"/>
</dbReference>
<dbReference type="iPTMnet" id="P42261"/>
<dbReference type="PhosphoSitePlus" id="P42261"/>
<dbReference type="SwissPalm" id="P42261"/>
<dbReference type="BioMuta" id="GRIA1"/>
<dbReference type="DMDM" id="116242505"/>
<dbReference type="MassIVE" id="P42261"/>
<dbReference type="PaxDb" id="9606-ENSP00000428994"/>
<dbReference type="PeptideAtlas" id="P42261"/>
<dbReference type="ProteomicsDB" id="18070"/>
<dbReference type="ProteomicsDB" id="55496">
    <molecule id="P42261-1"/>
</dbReference>
<dbReference type="ProteomicsDB" id="55497">
    <molecule id="P42261-2"/>
</dbReference>
<dbReference type="ProteomicsDB" id="6455"/>
<dbReference type="ProteomicsDB" id="6517"/>
<dbReference type="ProteomicsDB" id="7030"/>
<dbReference type="Antibodypedia" id="28276">
    <property type="antibodies" value="1041 antibodies from 44 providers"/>
</dbReference>
<dbReference type="DNASU" id="2890"/>
<dbReference type="Ensembl" id="ENST00000285900.10">
    <molecule id="P42261-1"/>
    <property type="protein sequence ID" value="ENSP00000285900.4"/>
    <property type="gene ID" value="ENSG00000155511.19"/>
</dbReference>
<dbReference type="Ensembl" id="ENST00000340592.10">
    <molecule id="P42261-2"/>
    <property type="protein sequence ID" value="ENSP00000339343.5"/>
    <property type="gene ID" value="ENSG00000155511.19"/>
</dbReference>
<dbReference type="Ensembl" id="ENST00000448073.8">
    <molecule id="P42261-6"/>
    <property type="protein sequence ID" value="ENSP00000415569.2"/>
    <property type="gene ID" value="ENSG00000155511.19"/>
</dbReference>
<dbReference type="Ensembl" id="ENST00000518142.5">
    <molecule id="P42261-3"/>
    <property type="protein sequence ID" value="ENSP00000427920.1"/>
    <property type="gene ID" value="ENSG00000155511.19"/>
</dbReference>
<dbReference type="Ensembl" id="ENST00000518783.1">
    <molecule id="P42261-5"/>
    <property type="protein sequence ID" value="ENSP00000428994.1"/>
    <property type="gene ID" value="ENSG00000155511.19"/>
</dbReference>
<dbReference type="Ensembl" id="ENST00000521843.6">
    <molecule id="P42261-4"/>
    <property type="protein sequence ID" value="ENSP00000427864.2"/>
    <property type="gene ID" value="ENSG00000155511.19"/>
</dbReference>
<dbReference type="GeneID" id="2890"/>
<dbReference type="KEGG" id="hsa:2890"/>
<dbReference type="MANE-Select" id="ENST00000285900.10">
    <property type="protein sequence ID" value="ENSP00000285900.4"/>
    <property type="RefSeq nucleotide sequence ID" value="NM_000827.4"/>
    <property type="RefSeq protein sequence ID" value="NP_000818.2"/>
</dbReference>
<dbReference type="UCSC" id="uc003luy.5">
    <molecule id="P42261-1"/>
    <property type="organism name" value="human"/>
</dbReference>
<dbReference type="AGR" id="HGNC:4571"/>
<dbReference type="CTD" id="2890"/>
<dbReference type="DisGeNET" id="2890"/>
<dbReference type="GeneCards" id="GRIA1"/>
<dbReference type="HGNC" id="HGNC:4571">
    <property type="gene designation" value="GRIA1"/>
</dbReference>
<dbReference type="HPA" id="ENSG00000155511">
    <property type="expression patterns" value="Group enriched (brain, retina)"/>
</dbReference>
<dbReference type="MalaCards" id="GRIA1"/>
<dbReference type="MIM" id="138248">
    <property type="type" value="gene"/>
</dbReference>
<dbReference type="MIM" id="619927">
    <property type="type" value="phenotype"/>
</dbReference>
<dbReference type="MIM" id="619931">
    <property type="type" value="phenotype"/>
</dbReference>
<dbReference type="neXtProt" id="NX_P42261"/>
<dbReference type="OpenTargets" id="ENSG00000155511"/>
<dbReference type="Orphanet" id="178469">
    <property type="disease" value="Autosomal dominant non-syndromic intellectual disability"/>
</dbReference>
<dbReference type="Orphanet" id="88616">
    <property type="disease" value="Autosomal recessive non-syndromic intellectual disability"/>
</dbReference>
<dbReference type="PharmGKB" id="PA28966"/>
<dbReference type="VEuPathDB" id="HostDB:ENSG00000155511"/>
<dbReference type="eggNOG" id="KOG1054">
    <property type="taxonomic scope" value="Eukaryota"/>
</dbReference>
<dbReference type="GeneTree" id="ENSGT00940000157342"/>
<dbReference type="HOGENOM" id="CLU_007257_1_2_1"/>
<dbReference type="InParanoid" id="P42261"/>
<dbReference type="OMA" id="YQMDAVA"/>
<dbReference type="OrthoDB" id="5984008at2759"/>
<dbReference type="PAN-GO" id="P42261">
    <property type="GO annotations" value="5 GO annotations based on evolutionary models"/>
</dbReference>
<dbReference type="PhylomeDB" id="P42261"/>
<dbReference type="TreeFam" id="TF315232"/>
<dbReference type="PathwayCommons" id="P42261"/>
<dbReference type="Reactome" id="R-HSA-204005">
    <property type="pathway name" value="COPII-mediated vesicle transport"/>
</dbReference>
<dbReference type="Reactome" id="R-HSA-399710">
    <property type="pathway name" value="Activation of AMPA receptors"/>
</dbReference>
<dbReference type="Reactome" id="R-HSA-399719">
    <property type="pathway name" value="Trafficking of AMPA receptors"/>
</dbReference>
<dbReference type="Reactome" id="R-HSA-416993">
    <property type="pathway name" value="Trafficking of GluR2-containing AMPA receptors"/>
</dbReference>
<dbReference type="Reactome" id="R-HSA-438066">
    <property type="pathway name" value="Unblocking of NMDA receptors, glutamate binding and activation"/>
</dbReference>
<dbReference type="Reactome" id="R-HSA-5694530">
    <property type="pathway name" value="Cargo concentration in the ER"/>
</dbReference>
<dbReference type="Reactome" id="R-HSA-8849932">
    <property type="pathway name" value="Synaptic adhesion-like molecules"/>
</dbReference>
<dbReference type="Reactome" id="R-HSA-9620244">
    <property type="pathway name" value="Long-term potentiation"/>
</dbReference>
<dbReference type="SignaLink" id="P42261"/>
<dbReference type="SIGNOR" id="P42261"/>
<dbReference type="BioGRID-ORCS" id="2890">
    <property type="hits" value="6 hits in 1155 CRISPR screens"/>
</dbReference>
<dbReference type="CD-CODE" id="FB4E32DD">
    <property type="entry name" value="Presynaptic clusters and postsynaptic densities"/>
</dbReference>
<dbReference type="ChiTaRS" id="GRIA1">
    <property type="organism name" value="human"/>
</dbReference>
<dbReference type="GeneWiki" id="GRIA1"/>
<dbReference type="GenomeRNAi" id="2890"/>
<dbReference type="Pharos" id="P42261">
    <property type="development level" value="Tclin"/>
</dbReference>
<dbReference type="PRO" id="PR:P42261"/>
<dbReference type="Proteomes" id="UP000005640">
    <property type="component" value="Chromosome 5"/>
</dbReference>
<dbReference type="RNAct" id="P42261">
    <property type="molecule type" value="protein"/>
</dbReference>
<dbReference type="Bgee" id="ENSG00000155511">
    <property type="expression patterns" value="Expressed in CA1 field of hippocampus and 136 other cell types or tissues"/>
</dbReference>
<dbReference type="GO" id="GO:0032281">
    <property type="term" value="C:AMPA glutamate receptor complex"/>
    <property type="evidence" value="ECO:0000314"/>
    <property type="project" value="UniProtKB"/>
</dbReference>
<dbReference type="GO" id="GO:0044308">
    <property type="term" value="C:axonal spine"/>
    <property type="evidence" value="ECO:0007669"/>
    <property type="project" value="Ensembl"/>
</dbReference>
<dbReference type="GO" id="GO:0009986">
    <property type="term" value="C:cell surface"/>
    <property type="evidence" value="ECO:0000250"/>
    <property type="project" value="BHF-UCL"/>
</dbReference>
<dbReference type="GO" id="GO:0005911">
    <property type="term" value="C:cell-cell junction"/>
    <property type="evidence" value="ECO:0007669"/>
    <property type="project" value="Ensembl"/>
</dbReference>
<dbReference type="GO" id="GO:0005829">
    <property type="term" value="C:cytosol"/>
    <property type="evidence" value="ECO:0007669"/>
    <property type="project" value="Ensembl"/>
</dbReference>
<dbReference type="GO" id="GO:0030425">
    <property type="term" value="C:dendrite"/>
    <property type="evidence" value="ECO:0000250"/>
    <property type="project" value="UniProtKB"/>
</dbReference>
<dbReference type="GO" id="GO:0043198">
    <property type="term" value="C:dendritic shaft"/>
    <property type="evidence" value="ECO:0007669"/>
    <property type="project" value="Ensembl"/>
</dbReference>
<dbReference type="GO" id="GO:0043197">
    <property type="term" value="C:dendritic spine"/>
    <property type="evidence" value="ECO:0000250"/>
    <property type="project" value="UniProtKB"/>
</dbReference>
<dbReference type="GO" id="GO:0032591">
    <property type="term" value="C:dendritic spine membrane"/>
    <property type="evidence" value="ECO:0000314"/>
    <property type="project" value="UniProtKB"/>
</dbReference>
<dbReference type="GO" id="GO:0031901">
    <property type="term" value="C:early endosome membrane"/>
    <property type="evidence" value="ECO:0000250"/>
    <property type="project" value="UniProtKB"/>
</dbReference>
<dbReference type="GO" id="GO:0030666">
    <property type="term" value="C:endocytic vesicle membrane"/>
    <property type="evidence" value="ECO:0000304"/>
    <property type="project" value="Reactome"/>
</dbReference>
<dbReference type="GO" id="GO:0005789">
    <property type="term" value="C:endoplasmic reticulum membrane"/>
    <property type="evidence" value="ECO:0000250"/>
    <property type="project" value="UniProtKB"/>
</dbReference>
<dbReference type="GO" id="GO:0033116">
    <property type="term" value="C:endoplasmic reticulum-Golgi intermediate compartment membrane"/>
    <property type="evidence" value="ECO:0000304"/>
    <property type="project" value="Reactome"/>
</dbReference>
<dbReference type="GO" id="GO:0012507">
    <property type="term" value="C:ER to Golgi transport vesicle membrane"/>
    <property type="evidence" value="ECO:0000304"/>
    <property type="project" value="Reactome"/>
</dbReference>
<dbReference type="GO" id="GO:0060076">
    <property type="term" value="C:excitatory synapse"/>
    <property type="evidence" value="ECO:0007669"/>
    <property type="project" value="Ensembl"/>
</dbReference>
<dbReference type="GO" id="GO:0009897">
    <property type="term" value="C:external side of plasma membrane"/>
    <property type="evidence" value="ECO:0007669"/>
    <property type="project" value="Ensembl"/>
</dbReference>
<dbReference type="GO" id="GO:0098978">
    <property type="term" value="C:glutamatergic synapse"/>
    <property type="evidence" value="ECO:0007669"/>
    <property type="project" value="Ensembl"/>
</dbReference>
<dbReference type="GO" id="GO:0031594">
    <property type="term" value="C:neuromuscular junction"/>
    <property type="evidence" value="ECO:0007669"/>
    <property type="project" value="Ensembl"/>
</dbReference>
<dbReference type="GO" id="GO:0044309">
    <property type="term" value="C:neuron spine"/>
    <property type="evidence" value="ECO:0000250"/>
    <property type="project" value="BHF-UCL"/>
</dbReference>
<dbReference type="GO" id="GO:0043025">
    <property type="term" value="C:neuronal cell body"/>
    <property type="evidence" value="ECO:0000250"/>
    <property type="project" value="ARUK-UCL"/>
</dbReference>
<dbReference type="GO" id="GO:0032809">
    <property type="term" value="C:neuronal cell body membrane"/>
    <property type="evidence" value="ECO:0007669"/>
    <property type="project" value="Ensembl"/>
</dbReference>
<dbReference type="GO" id="GO:0099544">
    <property type="term" value="C:perisynaptic space"/>
    <property type="evidence" value="ECO:0007669"/>
    <property type="project" value="Ensembl"/>
</dbReference>
<dbReference type="GO" id="GO:0005886">
    <property type="term" value="C:plasma membrane"/>
    <property type="evidence" value="ECO:0000250"/>
    <property type="project" value="ARUK-UCL"/>
</dbReference>
<dbReference type="GO" id="GO:0014069">
    <property type="term" value="C:postsynaptic density"/>
    <property type="evidence" value="ECO:0000250"/>
    <property type="project" value="UniProtKB"/>
</dbReference>
<dbReference type="GO" id="GO:0098839">
    <property type="term" value="C:postsynaptic density membrane"/>
    <property type="evidence" value="ECO:0000250"/>
    <property type="project" value="UniProtKB"/>
</dbReference>
<dbReference type="GO" id="GO:0099092">
    <property type="term" value="C:postsynaptic density, intracellular component"/>
    <property type="evidence" value="ECO:0007669"/>
    <property type="project" value="Ensembl"/>
</dbReference>
<dbReference type="GO" id="GO:0045211">
    <property type="term" value="C:postsynaptic membrane"/>
    <property type="evidence" value="ECO:0000314"/>
    <property type="project" value="UniProtKB"/>
</dbReference>
<dbReference type="GO" id="GO:0098793">
    <property type="term" value="C:presynapse"/>
    <property type="evidence" value="ECO:0000250"/>
    <property type="project" value="UniProtKB"/>
</dbReference>
<dbReference type="GO" id="GO:0048787">
    <property type="term" value="C:presynaptic active zone membrane"/>
    <property type="evidence" value="ECO:0007669"/>
    <property type="project" value="Ensembl"/>
</dbReference>
<dbReference type="GO" id="GO:1990635">
    <property type="term" value="C:proximal dendrite"/>
    <property type="evidence" value="ECO:0007669"/>
    <property type="project" value="Ensembl"/>
</dbReference>
<dbReference type="GO" id="GO:0055037">
    <property type="term" value="C:recycling endosome"/>
    <property type="evidence" value="ECO:0000314"/>
    <property type="project" value="UniProtKB"/>
</dbReference>
<dbReference type="GO" id="GO:0055038">
    <property type="term" value="C:recycling endosome membrane"/>
    <property type="evidence" value="ECO:0000250"/>
    <property type="project" value="UniProtKB"/>
</dbReference>
<dbReference type="GO" id="GO:0097060">
    <property type="term" value="C:synaptic membrane"/>
    <property type="evidence" value="ECO:0000250"/>
    <property type="project" value="ARUK-UCL"/>
</dbReference>
<dbReference type="GO" id="GO:0030672">
    <property type="term" value="C:synaptic vesicle membrane"/>
    <property type="evidence" value="ECO:0007669"/>
    <property type="project" value="Ensembl"/>
</dbReference>
<dbReference type="GO" id="GO:0008179">
    <property type="term" value="F:adenylate cyclase binding"/>
    <property type="evidence" value="ECO:0007669"/>
    <property type="project" value="Ensembl"/>
</dbReference>
<dbReference type="GO" id="GO:0004971">
    <property type="term" value="F:AMPA glutamate receptor activity"/>
    <property type="evidence" value="ECO:0000314"/>
    <property type="project" value="UniProtKB"/>
</dbReference>
<dbReference type="GO" id="GO:0001540">
    <property type="term" value="F:amyloid-beta binding"/>
    <property type="evidence" value="ECO:0000250"/>
    <property type="project" value="ARUK-UCL"/>
</dbReference>
<dbReference type="GO" id="GO:0031698">
    <property type="term" value="F:beta-2 adrenergic receptor binding"/>
    <property type="evidence" value="ECO:0007669"/>
    <property type="project" value="Ensembl"/>
</dbReference>
<dbReference type="GO" id="GO:0001965">
    <property type="term" value="F:G-protein alpha-subunit binding"/>
    <property type="evidence" value="ECO:0007669"/>
    <property type="project" value="Ensembl"/>
</dbReference>
<dbReference type="GO" id="GO:0031681">
    <property type="term" value="F:G-protein beta-subunit binding"/>
    <property type="evidence" value="ECO:0007669"/>
    <property type="project" value="Ensembl"/>
</dbReference>
<dbReference type="GO" id="GO:0035254">
    <property type="term" value="F:glutamate receptor binding"/>
    <property type="evidence" value="ECO:0007669"/>
    <property type="project" value="Ensembl"/>
</dbReference>
<dbReference type="GO" id="GO:0022849">
    <property type="term" value="F:glutamate-gated calcium ion channel activity"/>
    <property type="evidence" value="ECO:0000250"/>
    <property type="project" value="UniProtKB"/>
</dbReference>
<dbReference type="GO" id="GO:0042802">
    <property type="term" value="F:identical protein binding"/>
    <property type="evidence" value="ECO:0007669"/>
    <property type="project" value="Ensembl"/>
</dbReference>
<dbReference type="GO" id="GO:0019865">
    <property type="term" value="F:immunoglobulin binding"/>
    <property type="evidence" value="ECO:0007669"/>
    <property type="project" value="Ensembl"/>
</dbReference>
<dbReference type="GO" id="GO:0099507">
    <property type="term" value="F:ligand-gated monoatomic ion channel activity involved in regulation of presynaptic membrane potential"/>
    <property type="evidence" value="ECO:0000314"/>
    <property type="project" value="SynGO"/>
</dbReference>
<dbReference type="GO" id="GO:0031489">
    <property type="term" value="F:myosin V binding"/>
    <property type="evidence" value="ECO:0007669"/>
    <property type="project" value="Ensembl"/>
</dbReference>
<dbReference type="GO" id="GO:0030165">
    <property type="term" value="F:PDZ domain binding"/>
    <property type="evidence" value="ECO:0000250"/>
    <property type="project" value="BHF-UCL"/>
</dbReference>
<dbReference type="GO" id="GO:0051428">
    <property type="term" value="F:peptide hormone receptor binding"/>
    <property type="evidence" value="ECO:0007669"/>
    <property type="project" value="Ensembl"/>
</dbReference>
<dbReference type="GO" id="GO:0051018">
    <property type="term" value="F:protein kinase A binding"/>
    <property type="evidence" value="ECO:0007669"/>
    <property type="project" value="Ensembl"/>
</dbReference>
<dbReference type="GO" id="GO:0019901">
    <property type="term" value="F:protein kinase binding"/>
    <property type="evidence" value="ECO:0007669"/>
    <property type="project" value="Ensembl"/>
</dbReference>
<dbReference type="GO" id="GO:0097110">
    <property type="term" value="F:scaffold protein binding"/>
    <property type="evidence" value="ECO:0007669"/>
    <property type="project" value="Ensembl"/>
</dbReference>
<dbReference type="GO" id="GO:0031267">
    <property type="term" value="F:small GTPase binding"/>
    <property type="evidence" value="ECO:0007669"/>
    <property type="project" value="Ensembl"/>
</dbReference>
<dbReference type="GO" id="GO:1904315">
    <property type="term" value="F:transmitter-gated monoatomic ion channel activity involved in regulation of postsynaptic membrane potential"/>
    <property type="evidence" value="ECO:0000318"/>
    <property type="project" value="GO_Central"/>
</dbReference>
<dbReference type="GO" id="GO:0048266">
    <property type="term" value="P:behavioral response to pain"/>
    <property type="evidence" value="ECO:0007669"/>
    <property type="project" value="Ensembl"/>
</dbReference>
<dbReference type="GO" id="GO:0071418">
    <property type="term" value="P:cellular response to amine stimulus"/>
    <property type="evidence" value="ECO:0007669"/>
    <property type="project" value="Ensembl"/>
</dbReference>
<dbReference type="GO" id="GO:0071242">
    <property type="term" value="P:cellular response to ammonium ion"/>
    <property type="evidence" value="ECO:0007669"/>
    <property type="project" value="Ensembl"/>
</dbReference>
<dbReference type="GO" id="GO:1990416">
    <property type="term" value="P:cellular response to brain-derived neurotrophic factor stimulus"/>
    <property type="evidence" value="ECO:0007669"/>
    <property type="project" value="Ensembl"/>
</dbReference>
<dbReference type="GO" id="GO:0071359">
    <property type="term" value="P:cellular response to dsRNA"/>
    <property type="evidence" value="ECO:0007669"/>
    <property type="project" value="Ensembl"/>
</dbReference>
<dbReference type="GO" id="GO:1905232">
    <property type="term" value="P:cellular response to L-glutamate"/>
    <property type="evidence" value="ECO:0007669"/>
    <property type="project" value="Ensembl"/>
</dbReference>
<dbReference type="GO" id="GO:0071375">
    <property type="term" value="P:cellular response to peptide hormone stimulus"/>
    <property type="evidence" value="ECO:0007669"/>
    <property type="project" value="Ensembl"/>
</dbReference>
<dbReference type="GO" id="GO:0021987">
    <property type="term" value="P:cerebral cortex development"/>
    <property type="evidence" value="ECO:0007669"/>
    <property type="project" value="Ensembl"/>
</dbReference>
<dbReference type="GO" id="GO:0007268">
    <property type="term" value="P:chemical synaptic transmission"/>
    <property type="evidence" value="ECO:0000304"/>
    <property type="project" value="ProtInc"/>
</dbReference>
<dbReference type="GO" id="GO:1990708">
    <property type="term" value="P:conditioned place preference"/>
    <property type="evidence" value="ECO:0007669"/>
    <property type="project" value="Ensembl"/>
</dbReference>
<dbReference type="GO" id="GO:0007616">
    <property type="term" value="P:long-term memory"/>
    <property type="evidence" value="ECO:0007669"/>
    <property type="project" value="Ensembl"/>
</dbReference>
<dbReference type="GO" id="GO:0060292">
    <property type="term" value="P:long-term synaptic depression"/>
    <property type="evidence" value="ECO:0007669"/>
    <property type="project" value="Ensembl"/>
</dbReference>
<dbReference type="GO" id="GO:0060291">
    <property type="term" value="P:long-term synaptic potentiation"/>
    <property type="evidence" value="ECO:0007669"/>
    <property type="project" value="Ensembl"/>
</dbReference>
<dbReference type="GO" id="GO:0050804">
    <property type="term" value="P:modulation of chemical synaptic transmission"/>
    <property type="evidence" value="ECO:0000318"/>
    <property type="project" value="GO_Central"/>
</dbReference>
<dbReference type="GO" id="GO:0019228">
    <property type="term" value="P:neuronal action potential"/>
    <property type="evidence" value="ECO:0007669"/>
    <property type="project" value="Ensembl"/>
</dbReference>
<dbReference type="GO" id="GO:2000463">
    <property type="term" value="P:positive regulation of excitatory postsynaptic potential"/>
    <property type="evidence" value="ECO:0007669"/>
    <property type="project" value="Ensembl"/>
</dbReference>
<dbReference type="GO" id="GO:0010628">
    <property type="term" value="P:positive regulation of gene expression"/>
    <property type="evidence" value="ECO:0007669"/>
    <property type="project" value="Ensembl"/>
</dbReference>
<dbReference type="GO" id="GO:0090326">
    <property type="term" value="P:positive regulation of locomotion involved in locomotory behavior"/>
    <property type="evidence" value="ECO:0007669"/>
    <property type="project" value="Ensembl"/>
</dbReference>
<dbReference type="GO" id="GO:0045838">
    <property type="term" value="P:positive regulation of membrane potential"/>
    <property type="evidence" value="ECO:0007669"/>
    <property type="project" value="Ensembl"/>
</dbReference>
<dbReference type="GO" id="GO:0031623">
    <property type="term" value="P:receptor internalization"/>
    <property type="evidence" value="ECO:0007669"/>
    <property type="project" value="Ensembl"/>
</dbReference>
<dbReference type="GO" id="GO:0034765">
    <property type="term" value="P:regulation of monoatomic ion transmembrane transport"/>
    <property type="evidence" value="ECO:0007669"/>
    <property type="project" value="Ensembl"/>
</dbReference>
<dbReference type="GO" id="GO:0001919">
    <property type="term" value="P:regulation of receptor recycling"/>
    <property type="evidence" value="ECO:0007669"/>
    <property type="project" value="Ensembl"/>
</dbReference>
<dbReference type="GO" id="GO:0046685">
    <property type="term" value="P:response to arsenic-containing substance"/>
    <property type="evidence" value="ECO:0007669"/>
    <property type="project" value="Ensembl"/>
</dbReference>
<dbReference type="GO" id="GO:0042220">
    <property type="term" value="P:response to cocaine"/>
    <property type="evidence" value="ECO:0007669"/>
    <property type="project" value="Ensembl"/>
</dbReference>
<dbReference type="GO" id="GO:0051602">
    <property type="term" value="P:response to electrical stimulus"/>
    <property type="evidence" value="ECO:0007669"/>
    <property type="project" value="Ensembl"/>
</dbReference>
<dbReference type="GO" id="GO:0032355">
    <property type="term" value="P:response to estradiol"/>
    <property type="evidence" value="ECO:0007669"/>
    <property type="project" value="Ensembl"/>
</dbReference>
<dbReference type="GO" id="GO:0045471">
    <property type="term" value="P:response to ethanol"/>
    <property type="evidence" value="ECO:0007669"/>
    <property type="project" value="Ensembl"/>
</dbReference>
<dbReference type="GO" id="GO:0060992">
    <property type="term" value="P:response to fungicide"/>
    <property type="evidence" value="ECO:0007669"/>
    <property type="project" value="Ensembl"/>
</dbReference>
<dbReference type="GO" id="GO:0010226">
    <property type="term" value="P:response to lithium ion"/>
    <property type="evidence" value="ECO:0007669"/>
    <property type="project" value="Ensembl"/>
</dbReference>
<dbReference type="GO" id="GO:0043278">
    <property type="term" value="P:response to morphine"/>
    <property type="evidence" value="ECO:0007669"/>
    <property type="project" value="Ensembl"/>
</dbReference>
<dbReference type="GO" id="GO:0031667">
    <property type="term" value="P:response to nutrient levels"/>
    <property type="evidence" value="ECO:0007669"/>
    <property type="project" value="Ensembl"/>
</dbReference>
<dbReference type="GO" id="GO:1990911">
    <property type="term" value="P:response to psychosocial stress"/>
    <property type="evidence" value="ECO:0007669"/>
    <property type="project" value="Ensembl"/>
</dbReference>
<dbReference type="GO" id="GO:0009744">
    <property type="term" value="P:response to sucrose"/>
    <property type="evidence" value="ECO:0007669"/>
    <property type="project" value="Ensembl"/>
</dbReference>
<dbReference type="GO" id="GO:0009410">
    <property type="term" value="P:response to xenobiotic stimulus"/>
    <property type="evidence" value="ECO:0007669"/>
    <property type="project" value="Ensembl"/>
</dbReference>
<dbReference type="GO" id="GO:0007165">
    <property type="term" value="P:signal transduction"/>
    <property type="evidence" value="ECO:0000304"/>
    <property type="project" value="ProtInc"/>
</dbReference>
<dbReference type="GO" id="GO:0021510">
    <property type="term" value="P:spinal cord development"/>
    <property type="evidence" value="ECO:0007669"/>
    <property type="project" value="Ensembl"/>
</dbReference>
<dbReference type="GO" id="GO:0007416">
    <property type="term" value="P:synapse assembly"/>
    <property type="evidence" value="ECO:0007669"/>
    <property type="project" value="Ensembl"/>
</dbReference>
<dbReference type="GO" id="GO:0035249">
    <property type="term" value="P:synaptic transmission, glutamatergic"/>
    <property type="evidence" value="ECO:0000318"/>
    <property type="project" value="GO_Central"/>
</dbReference>
<dbReference type="CDD" id="cd06390">
    <property type="entry name" value="PBP1_iGluR_AMPA_GluR1"/>
    <property type="match status" value="1"/>
</dbReference>
<dbReference type="CDD" id="cd13729">
    <property type="entry name" value="PBP2_iGluR_AMPA_GluR1"/>
    <property type="match status" value="1"/>
</dbReference>
<dbReference type="FunFam" id="1.10.287.70:FF:000067">
    <property type="entry name" value="glutamate receptor 2 isoform X1"/>
    <property type="match status" value="1"/>
</dbReference>
<dbReference type="FunFam" id="3.40.190.10:FF:000001">
    <property type="entry name" value="Glutamate receptor ionotropic, kainate 2"/>
    <property type="match status" value="1"/>
</dbReference>
<dbReference type="FunFam" id="3.40.50.2300:FF:000004">
    <property type="entry name" value="Glutamate receptor, ionotropic, AMPA 2"/>
    <property type="match status" value="1"/>
</dbReference>
<dbReference type="FunFam" id="3.40.190.10:FF:000666">
    <property type="entry name" value="Glutamate receptor, ionotropic, AMPA 2a"/>
    <property type="match status" value="1"/>
</dbReference>
<dbReference type="Gene3D" id="1.10.287.70">
    <property type="match status" value="2"/>
</dbReference>
<dbReference type="Gene3D" id="3.40.50.2300">
    <property type="match status" value="2"/>
</dbReference>
<dbReference type="Gene3D" id="3.40.190.10">
    <property type="entry name" value="Periplasmic binding protein-like II"/>
    <property type="match status" value="2"/>
</dbReference>
<dbReference type="InterPro" id="IPR001828">
    <property type="entry name" value="ANF_lig-bd_rcpt"/>
</dbReference>
<dbReference type="InterPro" id="IPR019594">
    <property type="entry name" value="Glu/Gly-bd"/>
</dbReference>
<dbReference type="InterPro" id="IPR001508">
    <property type="entry name" value="Iono_Glu_rcpt_met"/>
</dbReference>
<dbReference type="InterPro" id="IPR015683">
    <property type="entry name" value="Ionotropic_Glu_rcpt"/>
</dbReference>
<dbReference type="InterPro" id="IPR001320">
    <property type="entry name" value="Iontro_rcpt_C"/>
</dbReference>
<dbReference type="InterPro" id="IPR028082">
    <property type="entry name" value="Peripla_BP_I"/>
</dbReference>
<dbReference type="PANTHER" id="PTHR18966">
    <property type="entry name" value="IONOTROPIC GLUTAMATE RECEPTOR"/>
    <property type="match status" value="1"/>
</dbReference>
<dbReference type="Pfam" id="PF01094">
    <property type="entry name" value="ANF_receptor"/>
    <property type="match status" value="1"/>
</dbReference>
<dbReference type="Pfam" id="PF00060">
    <property type="entry name" value="Lig_chan"/>
    <property type="match status" value="1"/>
</dbReference>
<dbReference type="Pfam" id="PF10613">
    <property type="entry name" value="Lig_chan-Glu_bd"/>
    <property type="match status" value="1"/>
</dbReference>
<dbReference type="PRINTS" id="PR00177">
    <property type="entry name" value="NMDARECEPTOR"/>
</dbReference>
<dbReference type="SMART" id="SM00918">
    <property type="entry name" value="Lig_chan-Glu_bd"/>
    <property type="match status" value="1"/>
</dbReference>
<dbReference type="SMART" id="SM00079">
    <property type="entry name" value="PBPe"/>
    <property type="match status" value="1"/>
</dbReference>
<dbReference type="SUPFAM" id="SSF53822">
    <property type="entry name" value="Periplasmic binding protein-like I"/>
    <property type="match status" value="1"/>
</dbReference>
<dbReference type="SUPFAM" id="SSF53850">
    <property type="entry name" value="Periplasmic binding protein-like II"/>
    <property type="match status" value="1"/>
</dbReference>
<dbReference type="SUPFAM" id="SSF81324">
    <property type="entry name" value="Voltage-gated potassium channels"/>
    <property type="match status" value="1"/>
</dbReference>
<gene>
    <name evidence="19" type="primary">GRIA1</name>
    <name type="synonym">GLUA1</name>
    <name type="synonym">GLUH1</name>
    <name evidence="15" type="synonym">GLUR1</name>
</gene>
<accession>P42261</accession>
<accession>B7Z2S0</accession>
<accession>B7Z2W8</accession>
<accession>B7Z3F6</accession>
<accession>B7Z9G9</accession>
<accession>D3DQI4</accession>
<accession>E7ESV8</accession>
<accession>Q2NKM6</accession>
<keyword id="KW-0002">3D-structure</keyword>
<keyword id="KW-0025">Alternative splicing</keyword>
<keyword id="KW-1003">Cell membrane</keyword>
<keyword id="KW-0966">Cell projection</keyword>
<keyword id="KW-0225">Disease variant</keyword>
<keyword id="KW-1015">Disulfide bond</keyword>
<keyword id="KW-0256">Endoplasmic reticulum</keyword>
<keyword id="KW-0967">Endosome</keyword>
<keyword id="KW-0325">Glycoprotein</keyword>
<keyword id="KW-0991">Intellectual disability</keyword>
<keyword id="KW-0407">Ion channel</keyword>
<keyword id="KW-0406">Ion transport</keyword>
<keyword id="KW-1071">Ligand-gated ion channel</keyword>
<keyword id="KW-0449">Lipoprotein</keyword>
<keyword id="KW-0472">Membrane</keyword>
<keyword id="KW-0564">Palmitate</keyword>
<keyword id="KW-0597">Phosphoprotein</keyword>
<keyword id="KW-0628">Postsynaptic cell membrane</keyword>
<keyword id="KW-1267">Proteomics identification</keyword>
<keyword id="KW-0675">Receptor</keyword>
<keyword id="KW-1185">Reference proteome</keyword>
<keyword id="KW-0732">Signal</keyword>
<keyword id="KW-0770">Synapse</keyword>
<keyword id="KW-0812">Transmembrane</keyword>
<keyword id="KW-1133">Transmembrane helix</keyword>
<keyword id="KW-0813">Transport</keyword>
<proteinExistence type="evidence at protein level"/>